<protein>
    <recommendedName>
        <fullName>DNA-binding protein modulo</fullName>
    </recommendedName>
</protein>
<organism>
    <name type="scientific">Drosophila melanogaster</name>
    <name type="common">Fruit fly</name>
    <dbReference type="NCBI Taxonomy" id="7227"/>
    <lineage>
        <taxon>Eukaryota</taxon>
        <taxon>Metazoa</taxon>
        <taxon>Ecdysozoa</taxon>
        <taxon>Arthropoda</taxon>
        <taxon>Hexapoda</taxon>
        <taxon>Insecta</taxon>
        <taxon>Pterygota</taxon>
        <taxon>Neoptera</taxon>
        <taxon>Endopterygota</taxon>
        <taxon>Diptera</taxon>
        <taxon>Brachycera</taxon>
        <taxon>Muscomorpha</taxon>
        <taxon>Ephydroidea</taxon>
        <taxon>Drosophilidae</taxon>
        <taxon>Drosophila</taxon>
        <taxon>Sophophora</taxon>
    </lineage>
</organism>
<evidence type="ECO:0000255" key="1"/>
<evidence type="ECO:0000255" key="2">
    <source>
        <dbReference type="PROSITE-ProRule" id="PRU00176"/>
    </source>
</evidence>
<evidence type="ECO:0000256" key="3">
    <source>
        <dbReference type="SAM" id="MobiDB-lite"/>
    </source>
</evidence>
<evidence type="ECO:0000269" key="4">
    <source>
    </source>
</evidence>
<evidence type="ECO:0000269" key="5">
    <source>
    </source>
</evidence>
<evidence type="ECO:0000305" key="6"/>
<accession>P13469</accession>
<accession>Q9V9S2</accession>
<feature type="chain" id="PRO_0000081635" description="DNA-binding protein modulo">
    <location>
        <begin position="1"/>
        <end position="542"/>
    </location>
</feature>
<feature type="domain" description="RRM 1" evidence="2">
    <location>
        <begin position="175"/>
        <end position="251"/>
    </location>
</feature>
<feature type="domain" description="RRM 2" evidence="2">
    <location>
        <begin position="258"/>
        <end position="331"/>
    </location>
</feature>
<feature type="domain" description="RRM 3" evidence="2">
    <location>
        <begin position="340"/>
        <end position="429"/>
    </location>
</feature>
<feature type="domain" description="RRM 4" evidence="2">
    <location>
        <begin position="420"/>
        <end position="489"/>
    </location>
</feature>
<feature type="region of interest" description="Disordered" evidence="3">
    <location>
        <begin position="1"/>
        <end position="166"/>
    </location>
</feature>
<feature type="region of interest" description="Disordered" evidence="3">
    <location>
        <begin position="505"/>
        <end position="542"/>
    </location>
</feature>
<feature type="compositionally biased region" description="Acidic residues" evidence="3">
    <location>
        <begin position="59"/>
        <end position="114"/>
    </location>
</feature>
<feature type="compositionally biased region" description="Acidic residues" evidence="3">
    <location>
        <begin position="123"/>
        <end position="135"/>
    </location>
</feature>
<feature type="compositionally biased region" description="Basic and acidic residues" evidence="3">
    <location>
        <begin position="136"/>
        <end position="158"/>
    </location>
</feature>
<feature type="modified residue" description="Phosphoserine" evidence="4 5">
    <location>
        <position position="42"/>
    </location>
</feature>
<feature type="modified residue" description="Phosphoserine" evidence="4 5">
    <location>
        <position position="44"/>
    </location>
</feature>
<feature type="modified residue" description="Phosphoserine" evidence="5">
    <location>
        <position position="120"/>
    </location>
</feature>
<feature type="modified residue" description="Phosphoserine" evidence="4 5">
    <location>
        <position position="129"/>
    </location>
</feature>
<feature type="modified residue" description="Phosphoserine" evidence="5">
    <location>
        <position position="142"/>
    </location>
</feature>
<feature type="modified residue" description="Phosphoserine" evidence="4">
    <location>
        <position position="304"/>
    </location>
</feature>
<feature type="modified residue" description="Phosphoserine; by PKA" evidence="1">
    <location>
        <position position="330"/>
    </location>
</feature>
<feature type="modified residue" description="Phosphoserine" evidence="5">
    <location>
        <position position="443"/>
    </location>
</feature>
<feature type="sequence conflict" description="In Ref. 1; CAA33732." evidence="6" ref="1">
    <original>P</original>
    <variation>A</variation>
    <location>
        <position position="74"/>
    </location>
</feature>
<feature type="sequence conflict" description="In Ref. 1; CAA33732." evidence="6" ref="1">
    <original>I</original>
    <variation>V</variation>
    <location>
        <position position="329"/>
    </location>
</feature>
<feature type="sequence conflict" description="In Ref. 1; CAA33732." evidence="6" ref="1">
    <original>RAPRKFQKDTKPNFGKKPFNKRPAQENGGKSFVKRARF</original>
    <variation>APRGSSKRTLSQTLVKNHLTSARHKRMVVNRLLKGQDFRT</variation>
    <location>
        <begin position="505"/>
        <end position="542"/>
    </location>
</feature>
<gene>
    <name type="primary">mod</name>
    <name type="ORF">CG2050</name>
</gene>
<name>MODU_DROME</name>
<sequence length="542" mass="60310">MAQKKAVTVKGKKATNGEEKPLAKRVTKSTKVQEEETVVPQSPSKKSRKQPVKEVPQFSEEDESDVEEQNDEQPGDDSDFETEEAAGLIDDEAEEDEEYNSDDEEDDDDDELEPGEVSKSEGADEVDESDDDEEAPVEKPVSKKSEKANSEKSEENRGIPKVKVGKIPLGTPKNQIVFVTNLPNEYLHKDLVALFAKFGRLSALQRFTNLNGNKSVLIAFDTSTGAEAVLQAKPKALTLGDNVLSVSQPRNKEENNERTVVVGLIGPNITKDDLKTFFEKVAPVEAVTISSNRLMPRAFVRLASVDDIPKALKLHSTELFSRFITVRRISQESISRTSELTLVVENVGKHESYSSDALEKIFKKFGDVEEIDVVCSKAVLAFVTFKQSDAATKALAQLDGKTVNKFEWKLHRFERSTSGRAILVTNLTSDATEADLRKVFNDSGEIESIIMLGQKAVVKFKDDEGFCKSFLANESIVNNAPIFIEPNSLLKHRLLKKRLAIGQTRAPRKFQKDTKPNFGKKPFNKRPAQENGGKSFVKRARF</sequence>
<keyword id="KW-0238">DNA-binding</keyword>
<keyword id="KW-0539">Nucleus</keyword>
<keyword id="KW-0597">Phosphoprotein</keyword>
<keyword id="KW-1185">Reference proteome</keyword>
<keyword id="KW-0677">Repeat</keyword>
<keyword id="KW-0694">RNA-binding</keyword>
<reference key="1">
    <citation type="journal article" date="1989" name="Nucleic Acids Res.">
        <title>Modulo, a new maternally expressed Drosophila gene encodes a DNA-binding protein with distinct acidic and basic regions.</title>
        <authorList>
            <person name="Krejci E."/>
            <person name="Garzino V."/>
            <person name="Mary C."/>
            <person name="Bennani N."/>
            <person name="Pradel J."/>
        </authorList>
    </citation>
    <scope>NUCLEOTIDE SEQUENCE [MRNA]</scope>
    <source>
        <strain>Oregon-R</strain>
    </source>
</reference>
<reference key="2">
    <citation type="journal article" date="2000" name="Science">
        <title>The genome sequence of Drosophila melanogaster.</title>
        <authorList>
            <person name="Adams M.D."/>
            <person name="Celniker S.E."/>
            <person name="Holt R.A."/>
            <person name="Evans C.A."/>
            <person name="Gocayne J.D."/>
            <person name="Amanatides P.G."/>
            <person name="Scherer S.E."/>
            <person name="Li P.W."/>
            <person name="Hoskins R.A."/>
            <person name="Galle R.F."/>
            <person name="George R.A."/>
            <person name="Lewis S.E."/>
            <person name="Richards S."/>
            <person name="Ashburner M."/>
            <person name="Henderson S.N."/>
            <person name="Sutton G.G."/>
            <person name="Wortman J.R."/>
            <person name="Yandell M.D."/>
            <person name="Zhang Q."/>
            <person name="Chen L.X."/>
            <person name="Brandon R.C."/>
            <person name="Rogers Y.-H.C."/>
            <person name="Blazej R.G."/>
            <person name="Champe M."/>
            <person name="Pfeiffer B.D."/>
            <person name="Wan K.H."/>
            <person name="Doyle C."/>
            <person name="Baxter E.G."/>
            <person name="Helt G."/>
            <person name="Nelson C.R."/>
            <person name="Miklos G.L.G."/>
            <person name="Abril J.F."/>
            <person name="Agbayani A."/>
            <person name="An H.-J."/>
            <person name="Andrews-Pfannkoch C."/>
            <person name="Baldwin D."/>
            <person name="Ballew R.M."/>
            <person name="Basu A."/>
            <person name="Baxendale J."/>
            <person name="Bayraktaroglu L."/>
            <person name="Beasley E.M."/>
            <person name="Beeson K.Y."/>
            <person name="Benos P.V."/>
            <person name="Berman B.P."/>
            <person name="Bhandari D."/>
            <person name="Bolshakov S."/>
            <person name="Borkova D."/>
            <person name="Botchan M.R."/>
            <person name="Bouck J."/>
            <person name="Brokstein P."/>
            <person name="Brottier P."/>
            <person name="Burtis K.C."/>
            <person name="Busam D.A."/>
            <person name="Butler H."/>
            <person name="Cadieu E."/>
            <person name="Center A."/>
            <person name="Chandra I."/>
            <person name="Cherry J.M."/>
            <person name="Cawley S."/>
            <person name="Dahlke C."/>
            <person name="Davenport L.B."/>
            <person name="Davies P."/>
            <person name="de Pablos B."/>
            <person name="Delcher A."/>
            <person name="Deng Z."/>
            <person name="Mays A.D."/>
            <person name="Dew I."/>
            <person name="Dietz S.M."/>
            <person name="Dodson K."/>
            <person name="Doup L.E."/>
            <person name="Downes M."/>
            <person name="Dugan-Rocha S."/>
            <person name="Dunkov B.C."/>
            <person name="Dunn P."/>
            <person name="Durbin K.J."/>
            <person name="Evangelista C.C."/>
            <person name="Ferraz C."/>
            <person name="Ferriera S."/>
            <person name="Fleischmann W."/>
            <person name="Fosler C."/>
            <person name="Gabrielian A.E."/>
            <person name="Garg N.S."/>
            <person name="Gelbart W.M."/>
            <person name="Glasser K."/>
            <person name="Glodek A."/>
            <person name="Gong F."/>
            <person name="Gorrell J.H."/>
            <person name="Gu Z."/>
            <person name="Guan P."/>
            <person name="Harris M."/>
            <person name="Harris N.L."/>
            <person name="Harvey D.A."/>
            <person name="Heiman T.J."/>
            <person name="Hernandez J.R."/>
            <person name="Houck J."/>
            <person name="Hostin D."/>
            <person name="Houston K.A."/>
            <person name="Howland T.J."/>
            <person name="Wei M.-H."/>
            <person name="Ibegwam C."/>
            <person name="Jalali M."/>
            <person name="Kalush F."/>
            <person name="Karpen G.H."/>
            <person name="Ke Z."/>
            <person name="Kennison J.A."/>
            <person name="Ketchum K.A."/>
            <person name="Kimmel B.E."/>
            <person name="Kodira C.D."/>
            <person name="Kraft C.L."/>
            <person name="Kravitz S."/>
            <person name="Kulp D."/>
            <person name="Lai Z."/>
            <person name="Lasko P."/>
            <person name="Lei Y."/>
            <person name="Levitsky A.A."/>
            <person name="Li J.H."/>
            <person name="Li Z."/>
            <person name="Liang Y."/>
            <person name="Lin X."/>
            <person name="Liu X."/>
            <person name="Mattei B."/>
            <person name="McIntosh T.C."/>
            <person name="McLeod M.P."/>
            <person name="McPherson D."/>
            <person name="Merkulov G."/>
            <person name="Milshina N.V."/>
            <person name="Mobarry C."/>
            <person name="Morris J."/>
            <person name="Moshrefi A."/>
            <person name="Mount S.M."/>
            <person name="Moy M."/>
            <person name="Murphy B."/>
            <person name="Murphy L."/>
            <person name="Muzny D.M."/>
            <person name="Nelson D.L."/>
            <person name="Nelson D.R."/>
            <person name="Nelson K.A."/>
            <person name="Nixon K."/>
            <person name="Nusskern D.R."/>
            <person name="Pacleb J.M."/>
            <person name="Palazzolo M."/>
            <person name="Pittman G.S."/>
            <person name="Pan S."/>
            <person name="Pollard J."/>
            <person name="Puri V."/>
            <person name="Reese M.G."/>
            <person name="Reinert K."/>
            <person name="Remington K."/>
            <person name="Saunders R.D.C."/>
            <person name="Scheeler F."/>
            <person name="Shen H."/>
            <person name="Shue B.C."/>
            <person name="Siden-Kiamos I."/>
            <person name="Simpson M."/>
            <person name="Skupski M.P."/>
            <person name="Smith T.J."/>
            <person name="Spier E."/>
            <person name="Spradling A.C."/>
            <person name="Stapleton M."/>
            <person name="Strong R."/>
            <person name="Sun E."/>
            <person name="Svirskas R."/>
            <person name="Tector C."/>
            <person name="Turner R."/>
            <person name="Venter E."/>
            <person name="Wang A.H."/>
            <person name="Wang X."/>
            <person name="Wang Z.-Y."/>
            <person name="Wassarman D.A."/>
            <person name="Weinstock G.M."/>
            <person name="Weissenbach J."/>
            <person name="Williams S.M."/>
            <person name="Woodage T."/>
            <person name="Worley K.C."/>
            <person name="Wu D."/>
            <person name="Yang S."/>
            <person name="Yao Q.A."/>
            <person name="Ye J."/>
            <person name="Yeh R.-F."/>
            <person name="Zaveri J.S."/>
            <person name="Zhan M."/>
            <person name="Zhang G."/>
            <person name="Zhao Q."/>
            <person name="Zheng L."/>
            <person name="Zheng X.H."/>
            <person name="Zhong F.N."/>
            <person name="Zhong W."/>
            <person name="Zhou X."/>
            <person name="Zhu S.C."/>
            <person name="Zhu X."/>
            <person name="Smith H.O."/>
            <person name="Gibbs R.A."/>
            <person name="Myers E.W."/>
            <person name="Rubin G.M."/>
            <person name="Venter J.C."/>
        </authorList>
    </citation>
    <scope>NUCLEOTIDE SEQUENCE [LARGE SCALE GENOMIC DNA]</scope>
    <source>
        <strain>Berkeley</strain>
    </source>
</reference>
<reference key="3">
    <citation type="journal article" date="2002" name="Genome Biol.">
        <title>Annotation of the Drosophila melanogaster euchromatic genome: a systematic review.</title>
        <authorList>
            <person name="Misra S."/>
            <person name="Crosby M.A."/>
            <person name="Mungall C.J."/>
            <person name="Matthews B.B."/>
            <person name="Campbell K.S."/>
            <person name="Hradecky P."/>
            <person name="Huang Y."/>
            <person name="Kaminker J.S."/>
            <person name="Millburn G.H."/>
            <person name="Prochnik S.E."/>
            <person name="Smith C.D."/>
            <person name="Tupy J.L."/>
            <person name="Whitfield E.J."/>
            <person name="Bayraktaroglu L."/>
            <person name="Berman B.P."/>
            <person name="Bettencourt B.R."/>
            <person name="Celniker S.E."/>
            <person name="de Grey A.D.N.J."/>
            <person name="Drysdale R.A."/>
            <person name="Harris N.L."/>
            <person name="Richter J."/>
            <person name="Russo S."/>
            <person name="Schroeder A.J."/>
            <person name="Shu S.Q."/>
            <person name="Stapleton M."/>
            <person name="Yamada C."/>
            <person name="Ashburner M."/>
            <person name="Gelbart W.M."/>
            <person name="Rubin G.M."/>
            <person name="Lewis S.E."/>
        </authorList>
    </citation>
    <scope>GENOME REANNOTATION</scope>
    <source>
        <strain>Berkeley</strain>
    </source>
</reference>
<reference key="4">
    <citation type="journal article" date="2002" name="Genome Biol.">
        <title>A Drosophila full-length cDNA resource.</title>
        <authorList>
            <person name="Stapleton M."/>
            <person name="Carlson J.W."/>
            <person name="Brokstein P."/>
            <person name="Yu C."/>
            <person name="Champe M."/>
            <person name="George R.A."/>
            <person name="Guarin H."/>
            <person name="Kronmiller B."/>
            <person name="Pacleb J.M."/>
            <person name="Park S."/>
            <person name="Wan K.H."/>
            <person name="Rubin G.M."/>
            <person name="Celniker S.E."/>
        </authorList>
    </citation>
    <scope>NUCLEOTIDE SEQUENCE [LARGE SCALE MRNA]</scope>
    <source>
        <strain>Berkeley</strain>
        <tissue>Embryo</tissue>
    </source>
</reference>
<reference key="5">
    <citation type="journal article" date="1994" name="Dev. Biol.">
        <title>The modifier of variegation modulo gene acts downstream of dorsoventral and HOM-C genes and is required for morphogenesis in Drosophila.</title>
        <authorList>
            <person name="Graba Y."/>
            <person name="Laurenti P."/>
            <person name="Perrin L."/>
            <person name="Aragnol D."/>
            <person name="Pradel J."/>
        </authorList>
    </citation>
    <scope>POSSIBLE FUNCTION</scope>
</reference>
<reference key="6">
    <citation type="journal article" date="2007" name="Mol. Biosyst.">
        <title>An integrated chemical, mass spectrometric and computational strategy for (quantitative) phosphoproteomics: application to Drosophila melanogaster Kc167 cells.</title>
        <authorList>
            <person name="Bodenmiller B."/>
            <person name="Mueller L.N."/>
            <person name="Pedrioli P.G.A."/>
            <person name="Pflieger D."/>
            <person name="Juenger M.A."/>
            <person name="Eng J.K."/>
            <person name="Aebersold R."/>
            <person name="Tao W.A."/>
        </authorList>
    </citation>
    <scope>PHOSPHORYLATION [LARGE SCALE ANALYSIS] AT SER-42; SER-44; SER-129 AND SER-304</scope>
    <scope>IDENTIFICATION BY MASS SPECTROMETRY</scope>
</reference>
<reference key="7">
    <citation type="journal article" date="2008" name="J. Proteome Res.">
        <title>Phosphoproteome analysis of Drosophila melanogaster embryos.</title>
        <authorList>
            <person name="Zhai B."/>
            <person name="Villen J."/>
            <person name="Beausoleil S.A."/>
            <person name="Mintseris J."/>
            <person name="Gygi S.P."/>
        </authorList>
    </citation>
    <scope>PHOSPHORYLATION [LARGE SCALE ANALYSIS] AT SER-42; SER-44; SER-120; SER-129; SER-142 AND SER-443</scope>
    <scope>IDENTIFICATION BY MASS SPECTROMETRY</scope>
    <source>
        <tissue>Embryo</tissue>
    </source>
</reference>
<proteinExistence type="evidence at protein level"/>
<comment type="function">
    <text>Its capacity to bind DNA and protein(s), and its differential expression during development suggest a role in the regulation of gene expression during Drosophila development. It could, in interaction with other factors, be required for the translation of instructions provided by pattern forming genes and controls, via chromatin changes, the activity of genes critical for the process of morphogenesis of several embryonic territories.</text>
</comment>
<comment type="subcellular location">
    <subcellularLocation>
        <location>Nucleus</location>
    </subcellularLocation>
</comment>
<comment type="PTM">
    <text>The N-terminus is blocked.</text>
</comment>
<dbReference type="EMBL" id="X15702">
    <property type="protein sequence ID" value="CAA33732.1"/>
    <property type="molecule type" value="mRNA"/>
</dbReference>
<dbReference type="EMBL" id="AE014297">
    <property type="protein sequence ID" value="AAF57213.1"/>
    <property type="molecule type" value="Genomic_DNA"/>
</dbReference>
<dbReference type="EMBL" id="AY058519">
    <property type="protein sequence ID" value="AAL13748.1"/>
    <property type="molecule type" value="mRNA"/>
</dbReference>
<dbReference type="PIR" id="S06602">
    <property type="entry name" value="S06602"/>
</dbReference>
<dbReference type="RefSeq" id="NP_001247401.1">
    <property type="nucleotide sequence ID" value="NM_001260472.2"/>
</dbReference>
<dbReference type="RefSeq" id="NP_524614.2">
    <property type="nucleotide sequence ID" value="NM_079875.3"/>
</dbReference>
<dbReference type="SMR" id="P13469"/>
<dbReference type="BioGRID" id="68602">
    <property type="interactions" value="17"/>
</dbReference>
<dbReference type="DIP" id="DIP-19479N"/>
<dbReference type="FunCoup" id="P13469">
    <property type="interactions" value="273"/>
</dbReference>
<dbReference type="IntAct" id="P13469">
    <property type="interactions" value="119"/>
</dbReference>
<dbReference type="MINT" id="P13469"/>
<dbReference type="STRING" id="7227.FBpp0085233"/>
<dbReference type="iPTMnet" id="P13469"/>
<dbReference type="PaxDb" id="7227-FBpp0085233"/>
<dbReference type="DNASU" id="43764"/>
<dbReference type="EnsemblMetazoa" id="FBtr0085874">
    <property type="protein sequence ID" value="FBpp0085233"/>
    <property type="gene ID" value="FBgn0002780"/>
</dbReference>
<dbReference type="EnsemblMetazoa" id="FBtr0310268">
    <property type="protein sequence ID" value="FBpp0301951"/>
    <property type="gene ID" value="FBgn0002780"/>
</dbReference>
<dbReference type="GeneID" id="43764"/>
<dbReference type="KEGG" id="dme:Dmel_CG2050"/>
<dbReference type="AGR" id="FB:FBgn0002780"/>
<dbReference type="CTD" id="43764"/>
<dbReference type="FlyBase" id="FBgn0002780">
    <property type="gene designation" value="mod"/>
</dbReference>
<dbReference type="VEuPathDB" id="VectorBase:FBgn0002780"/>
<dbReference type="eggNOG" id="ENOG502T98N">
    <property type="taxonomic scope" value="Eukaryota"/>
</dbReference>
<dbReference type="GeneTree" id="ENSGT00940000175980"/>
<dbReference type="HOGENOM" id="CLU_502757_0_0_1"/>
<dbReference type="InParanoid" id="P13469"/>
<dbReference type="OMA" id="DDGFCKS"/>
<dbReference type="OrthoDB" id="442677at2759"/>
<dbReference type="PhylomeDB" id="P13469"/>
<dbReference type="SignaLink" id="P13469"/>
<dbReference type="BioGRID-ORCS" id="43764">
    <property type="hits" value="0 hits in 1 CRISPR screen"/>
</dbReference>
<dbReference type="ChiTaRS" id="mod">
    <property type="organism name" value="fly"/>
</dbReference>
<dbReference type="GenomeRNAi" id="43764"/>
<dbReference type="PRO" id="PR:P13469"/>
<dbReference type="Proteomes" id="UP000000803">
    <property type="component" value="Chromosome 3R"/>
</dbReference>
<dbReference type="Bgee" id="FBgn0002780">
    <property type="expression patterns" value="Expressed in cleaving embryo and 200 other cell types or tissues"/>
</dbReference>
<dbReference type="ExpressionAtlas" id="P13469">
    <property type="expression patterns" value="baseline and differential"/>
</dbReference>
<dbReference type="GO" id="GO:0005737">
    <property type="term" value="C:cytoplasm"/>
    <property type="evidence" value="ECO:0000314"/>
    <property type="project" value="FlyBase"/>
</dbReference>
<dbReference type="GO" id="GO:0016607">
    <property type="term" value="C:nuclear speck"/>
    <property type="evidence" value="ECO:0000318"/>
    <property type="project" value="GO_Central"/>
</dbReference>
<dbReference type="GO" id="GO:0005730">
    <property type="term" value="C:nucleolus"/>
    <property type="evidence" value="ECO:0000314"/>
    <property type="project" value="FlyBase"/>
</dbReference>
<dbReference type="GO" id="GO:0005634">
    <property type="term" value="C:nucleus"/>
    <property type="evidence" value="ECO:0000314"/>
    <property type="project" value="FlyBase"/>
</dbReference>
<dbReference type="GO" id="GO:0032991">
    <property type="term" value="C:protein-containing complex"/>
    <property type="evidence" value="ECO:0000353"/>
    <property type="project" value="FlyBase"/>
</dbReference>
<dbReference type="GO" id="GO:0003677">
    <property type="term" value="F:DNA binding"/>
    <property type="evidence" value="ECO:0000314"/>
    <property type="project" value="FlyBase"/>
</dbReference>
<dbReference type="GO" id="GO:0003723">
    <property type="term" value="F:RNA binding"/>
    <property type="evidence" value="ECO:0000318"/>
    <property type="project" value="GO_Central"/>
</dbReference>
<dbReference type="GO" id="GO:0043565">
    <property type="term" value="F:sequence-specific DNA binding"/>
    <property type="evidence" value="ECO:0000314"/>
    <property type="project" value="FlyBase"/>
</dbReference>
<dbReference type="GO" id="GO:0000381">
    <property type="term" value="P:regulation of alternative mRNA splicing, via spliceosome"/>
    <property type="evidence" value="ECO:0000318"/>
    <property type="project" value="GO_Central"/>
</dbReference>
<dbReference type="CDD" id="cd00590">
    <property type="entry name" value="RRM_SF"/>
    <property type="match status" value="2"/>
</dbReference>
<dbReference type="FunFam" id="3.30.70.330:FF:001526">
    <property type="entry name" value="Modulo, isoform C"/>
    <property type="match status" value="1"/>
</dbReference>
<dbReference type="Gene3D" id="3.30.70.330">
    <property type="match status" value="4"/>
</dbReference>
<dbReference type="InterPro" id="IPR012677">
    <property type="entry name" value="Nucleotide-bd_a/b_plait_sf"/>
</dbReference>
<dbReference type="InterPro" id="IPR035979">
    <property type="entry name" value="RBD_domain_sf"/>
</dbReference>
<dbReference type="InterPro" id="IPR000504">
    <property type="entry name" value="RRM_dom"/>
</dbReference>
<dbReference type="PANTHER" id="PTHR24012">
    <property type="entry name" value="RNA BINDING PROTEIN"/>
    <property type="match status" value="1"/>
</dbReference>
<dbReference type="Pfam" id="PF00076">
    <property type="entry name" value="RRM_1"/>
    <property type="match status" value="4"/>
</dbReference>
<dbReference type="SMART" id="SM00360">
    <property type="entry name" value="RRM"/>
    <property type="match status" value="4"/>
</dbReference>
<dbReference type="SUPFAM" id="SSF54928">
    <property type="entry name" value="RNA-binding domain, RBD"/>
    <property type="match status" value="3"/>
</dbReference>
<dbReference type="PROSITE" id="PS50102">
    <property type="entry name" value="RRM"/>
    <property type="match status" value="4"/>
</dbReference>